<feature type="peptide" id="PRO_0000247727" description="Bacteriocin curvaticin" evidence="3">
    <location>
        <begin position="1"/>
        <end position="30" status="greater than"/>
    </location>
</feature>
<feature type="disulfide bond" evidence="1">
    <location>
        <begin position="9"/>
        <end position="14"/>
    </location>
</feature>
<feature type="unsure residue" description="C or K" evidence="3">
    <location>
        <position position="9"/>
    </location>
</feature>
<feature type="unsure residue" evidence="3">
    <location>
        <position position="14"/>
    </location>
</feature>
<feature type="non-terminal residue" evidence="4">
    <location>
        <position position="30"/>
    </location>
</feature>
<keyword id="KW-0044">Antibiotic</keyword>
<keyword id="KW-0929">Antimicrobial</keyword>
<keyword id="KW-0078">Bacteriocin</keyword>
<keyword id="KW-0903">Direct protein sequencing</keyword>
<keyword id="KW-1015">Disulfide bond</keyword>
<keyword id="KW-0964">Secreted</keyword>
<sequence>AYPGNGVHCGKYSCTVDKQTAIGNIGNNAA</sequence>
<accession>P84886</accession>
<evidence type="ECO:0000250" key="1">
    <source>
        <dbReference type="UniProtKB" id="P29430"/>
    </source>
</evidence>
<evidence type="ECO:0000255" key="2"/>
<evidence type="ECO:0000269" key="3">
    <source>
    </source>
</evidence>
<evidence type="ECO:0000303" key="4">
    <source>
    </source>
</evidence>
<evidence type="ECO:0000305" key="5"/>
<name>CURVA_LATCU</name>
<comment type="function">
    <text evidence="3">Has antibacterial activity against the Gram-positive bacterium L.monocytogenes.</text>
</comment>
<comment type="biophysicochemical properties">
    <phDependence>
        <text evidence="3">Stable below pH 6.</text>
    </phDependence>
    <temperatureDependence>
        <text evidence="3">Stable below 60 degrees Celsius. Activity decreases sharply at temperatures above 60 degrees Celsius.</text>
    </temperatureDependence>
</comment>
<comment type="subcellular location">
    <subcellularLocation>
        <location evidence="3">Secreted</location>
    </subcellularLocation>
</comment>
<comment type="mass spectrometry"/>
<comment type="similarity">
    <text evidence="2">Belongs to the bacteriocin class IIA/YGNGV family.</text>
</comment>
<reference evidence="5" key="1">
    <citation type="journal article" date="2006" name="Antonie Van Leeuwenhoek">
        <title>Purification and characterization of curvaticin L442, a bacteriocin produced by Lactobacillus curvatus L442.</title>
        <authorList>
            <person name="Xiraphi N."/>
            <person name="Georgalaki M."/>
            <person name="Van Driessche G."/>
            <person name="Devreese B."/>
            <person name="Beeumen J.V."/>
            <person name="Tsakalidou E."/>
            <person name="Metaxopoulos J."/>
            <person name="Drosinos E.H."/>
        </authorList>
    </citation>
    <scope>PROTEIN SEQUENCE</scope>
    <scope>FUNCTION</scope>
    <scope>BIOPHYSICOCHEMICAL PROPERTIES</scope>
    <scope>SUBCELLULAR LOCATION</scope>
    <scope>MASS SPECTROMETRY</scope>
    <source>
        <strain evidence="3">L442</strain>
    </source>
</reference>
<proteinExistence type="evidence at protein level"/>
<dbReference type="GO" id="GO:0005576">
    <property type="term" value="C:extracellular region"/>
    <property type="evidence" value="ECO:0000314"/>
    <property type="project" value="UniProtKB"/>
</dbReference>
<dbReference type="GO" id="GO:0050830">
    <property type="term" value="P:defense response to Gram-positive bacterium"/>
    <property type="evidence" value="ECO:0000314"/>
    <property type="project" value="UniProtKB"/>
</dbReference>
<dbReference type="GO" id="GO:0031640">
    <property type="term" value="P:killing of cells of another organism"/>
    <property type="evidence" value="ECO:0007669"/>
    <property type="project" value="UniProtKB-KW"/>
</dbReference>
<dbReference type="Gene3D" id="1.20.5.130">
    <property type="match status" value="1"/>
</dbReference>
<dbReference type="InterPro" id="IPR023388">
    <property type="entry name" value="Bacteriocin_IIa_dom_sf"/>
</dbReference>
<protein>
    <recommendedName>
        <fullName>Bacteriocin curvaticin</fullName>
    </recommendedName>
</protein>
<organism>
    <name type="scientific">Latilactobacillus curvatus</name>
    <name type="common">Lactobacillus curvatus</name>
    <dbReference type="NCBI Taxonomy" id="28038"/>
    <lineage>
        <taxon>Bacteria</taxon>
        <taxon>Bacillati</taxon>
        <taxon>Bacillota</taxon>
        <taxon>Bacilli</taxon>
        <taxon>Lactobacillales</taxon>
        <taxon>Lactobacillaceae</taxon>
        <taxon>Latilactobacillus</taxon>
    </lineage>
</organism>